<name>EFP_XYLFA</name>
<reference key="1">
    <citation type="journal article" date="2000" name="Nature">
        <title>The genome sequence of the plant pathogen Xylella fastidiosa.</title>
        <authorList>
            <person name="Simpson A.J.G."/>
            <person name="Reinach F.C."/>
            <person name="Arruda P."/>
            <person name="Abreu F.A."/>
            <person name="Acencio M."/>
            <person name="Alvarenga R."/>
            <person name="Alves L.M.C."/>
            <person name="Araya J.E."/>
            <person name="Baia G.S."/>
            <person name="Baptista C.S."/>
            <person name="Barros M.H."/>
            <person name="Bonaccorsi E.D."/>
            <person name="Bordin S."/>
            <person name="Bove J.M."/>
            <person name="Briones M.R.S."/>
            <person name="Bueno M.R.P."/>
            <person name="Camargo A.A."/>
            <person name="Camargo L.E.A."/>
            <person name="Carraro D.M."/>
            <person name="Carrer H."/>
            <person name="Colauto N.B."/>
            <person name="Colombo C."/>
            <person name="Costa F.F."/>
            <person name="Costa M.C.R."/>
            <person name="Costa-Neto C.M."/>
            <person name="Coutinho L.L."/>
            <person name="Cristofani M."/>
            <person name="Dias-Neto E."/>
            <person name="Docena C."/>
            <person name="El-Dorry H."/>
            <person name="Facincani A.P."/>
            <person name="Ferreira A.J.S."/>
            <person name="Ferreira V.C.A."/>
            <person name="Ferro J.A."/>
            <person name="Fraga J.S."/>
            <person name="Franca S.C."/>
            <person name="Franco M.C."/>
            <person name="Frohme M."/>
            <person name="Furlan L.R."/>
            <person name="Garnier M."/>
            <person name="Goldman G.H."/>
            <person name="Goldman M.H.S."/>
            <person name="Gomes S.L."/>
            <person name="Gruber A."/>
            <person name="Ho P.L."/>
            <person name="Hoheisel J.D."/>
            <person name="Junqueira M.L."/>
            <person name="Kemper E.L."/>
            <person name="Kitajima J.P."/>
            <person name="Krieger J.E."/>
            <person name="Kuramae E.E."/>
            <person name="Laigret F."/>
            <person name="Lambais M.R."/>
            <person name="Leite L.C.C."/>
            <person name="Lemos E.G.M."/>
            <person name="Lemos M.V.F."/>
            <person name="Lopes S.A."/>
            <person name="Lopes C.R."/>
            <person name="Machado J.A."/>
            <person name="Machado M.A."/>
            <person name="Madeira A.M.B.N."/>
            <person name="Madeira H.M.F."/>
            <person name="Marino C.L."/>
            <person name="Marques M.V."/>
            <person name="Martins E.A.L."/>
            <person name="Martins E.M.F."/>
            <person name="Matsukuma A.Y."/>
            <person name="Menck C.F.M."/>
            <person name="Miracca E.C."/>
            <person name="Miyaki C.Y."/>
            <person name="Monteiro-Vitorello C.B."/>
            <person name="Moon D.H."/>
            <person name="Nagai M.A."/>
            <person name="Nascimento A.L.T.O."/>
            <person name="Netto L.E.S."/>
            <person name="Nhani A. Jr."/>
            <person name="Nobrega F.G."/>
            <person name="Nunes L.R."/>
            <person name="Oliveira M.A."/>
            <person name="de Oliveira M.C."/>
            <person name="de Oliveira R.C."/>
            <person name="Palmieri D.A."/>
            <person name="Paris A."/>
            <person name="Peixoto B.R."/>
            <person name="Pereira G.A.G."/>
            <person name="Pereira H.A. Jr."/>
            <person name="Pesquero J.B."/>
            <person name="Quaggio R.B."/>
            <person name="Roberto P.G."/>
            <person name="Rodrigues V."/>
            <person name="de Rosa A.J.M."/>
            <person name="de Rosa V.E. Jr."/>
            <person name="de Sa R.G."/>
            <person name="Santelli R.V."/>
            <person name="Sawasaki H.E."/>
            <person name="da Silva A.C.R."/>
            <person name="da Silva A.M."/>
            <person name="da Silva F.R."/>
            <person name="Silva W.A. Jr."/>
            <person name="da Silveira J.F."/>
            <person name="Silvestri M.L.Z."/>
            <person name="Siqueira W.J."/>
            <person name="de Souza A.A."/>
            <person name="de Souza A.P."/>
            <person name="Terenzi M.F."/>
            <person name="Truffi D."/>
            <person name="Tsai S.M."/>
            <person name="Tsuhako M.H."/>
            <person name="Vallada H."/>
            <person name="Van Sluys M.A."/>
            <person name="Verjovski-Almeida S."/>
            <person name="Vettore A.L."/>
            <person name="Zago M.A."/>
            <person name="Zatz M."/>
            <person name="Meidanis J."/>
            <person name="Setubal J.C."/>
        </authorList>
    </citation>
    <scope>NUCLEOTIDE SEQUENCE [LARGE SCALE GENOMIC DNA]</scope>
    <source>
        <strain>9a5c</strain>
    </source>
</reference>
<evidence type="ECO:0000255" key="1">
    <source>
        <dbReference type="HAMAP-Rule" id="MF_00141"/>
    </source>
</evidence>
<evidence type="ECO:0000305" key="2"/>
<feature type="chain" id="PRO_0000094374" description="Elongation factor P">
    <location>
        <begin position="1"/>
        <end position="188"/>
    </location>
</feature>
<feature type="modified residue" description="N6-(3,6-diaminohexanoyl)-5-hydroxylysine" evidence="1">
    <location>
        <position position="34"/>
    </location>
</feature>
<dbReference type="EMBL" id="AE003849">
    <property type="protein sequence ID" value="AAF85271.1"/>
    <property type="status" value="ALT_INIT"/>
    <property type="molecule type" value="Genomic_DNA"/>
</dbReference>
<dbReference type="PIR" id="B82554">
    <property type="entry name" value="B82554"/>
</dbReference>
<dbReference type="RefSeq" id="WP_004086027.1">
    <property type="nucleotide sequence ID" value="NC_002488.3"/>
</dbReference>
<dbReference type="SMR" id="P64044"/>
<dbReference type="STRING" id="160492.XF_2473"/>
<dbReference type="GeneID" id="93905313"/>
<dbReference type="KEGG" id="xfa:XF_2473"/>
<dbReference type="eggNOG" id="COG0231">
    <property type="taxonomic scope" value="Bacteria"/>
</dbReference>
<dbReference type="HOGENOM" id="CLU_074944_0_0_6"/>
<dbReference type="UniPathway" id="UPA00345"/>
<dbReference type="Proteomes" id="UP000000812">
    <property type="component" value="Chromosome"/>
</dbReference>
<dbReference type="GO" id="GO:0005737">
    <property type="term" value="C:cytoplasm"/>
    <property type="evidence" value="ECO:0007669"/>
    <property type="project" value="UniProtKB-SubCell"/>
</dbReference>
<dbReference type="GO" id="GO:0003746">
    <property type="term" value="F:translation elongation factor activity"/>
    <property type="evidence" value="ECO:0007669"/>
    <property type="project" value="UniProtKB-UniRule"/>
</dbReference>
<dbReference type="GO" id="GO:0043043">
    <property type="term" value="P:peptide biosynthetic process"/>
    <property type="evidence" value="ECO:0007669"/>
    <property type="project" value="InterPro"/>
</dbReference>
<dbReference type="CDD" id="cd04470">
    <property type="entry name" value="S1_EF-P_repeat_1"/>
    <property type="match status" value="1"/>
</dbReference>
<dbReference type="CDD" id="cd05794">
    <property type="entry name" value="S1_EF-P_repeat_2"/>
    <property type="match status" value="1"/>
</dbReference>
<dbReference type="FunFam" id="2.30.30.30:FF:000003">
    <property type="entry name" value="Elongation factor P"/>
    <property type="match status" value="1"/>
</dbReference>
<dbReference type="FunFam" id="2.40.50.140:FF:000004">
    <property type="entry name" value="Elongation factor P"/>
    <property type="match status" value="1"/>
</dbReference>
<dbReference type="FunFam" id="2.40.50.140:FF:000009">
    <property type="entry name" value="Elongation factor P"/>
    <property type="match status" value="1"/>
</dbReference>
<dbReference type="Gene3D" id="2.30.30.30">
    <property type="match status" value="1"/>
</dbReference>
<dbReference type="Gene3D" id="2.40.50.140">
    <property type="entry name" value="Nucleic acid-binding proteins"/>
    <property type="match status" value="2"/>
</dbReference>
<dbReference type="HAMAP" id="MF_00141">
    <property type="entry name" value="EF_P"/>
    <property type="match status" value="1"/>
</dbReference>
<dbReference type="InterPro" id="IPR015365">
    <property type="entry name" value="Elong-fact-P_C"/>
</dbReference>
<dbReference type="InterPro" id="IPR012340">
    <property type="entry name" value="NA-bd_OB-fold"/>
</dbReference>
<dbReference type="InterPro" id="IPR014722">
    <property type="entry name" value="Rib_uL2_dom2"/>
</dbReference>
<dbReference type="InterPro" id="IPR020599">
    <property type="entry name" value="Transl_elong_fac_P/YeiP"/>
</dbReference>
<dbReference type="InterPro" id="IPR013185">
    <property type="entry name" value="Transl_elong_KOW-like"/>
</dbReference>
<dbReference type="InterPro" id="IPR001059">
    <property type="entry name" value="Transl_elong_P/YeiP_cen"/>
</dbReference>
<dbReference type="InterPro" id="IPR013852">
    <property type="entry name" value="Transl_elong_P/YeiP_CS"/>
</dbReference>
<dbReference type="InterPro" id="IPR011768">
    <property type="entry name" value="Transl_elongation_fac_P"/>
</dbReference>
<dbReference type="InterPro" id="IPR008991">
    <property type="entry name" value="Translation_prot_SH3-like_sf"/>
</dbReference>
<dbReference type="NCBIfam" id="TIGR00038">
    <property type="entry name" value="efp"/>
    <property type="match status" value="1"/>
</dbReference>
<dbReference type="NCBIfam" id="NF001810">
    <property type="entry name" value="PRK00529.1"/>
    <property type="match status" value="1"/>
</dbReference>
<dbReference type="PANTHER" id="PTHR30053">
    <property type="entry name" value="ELONGATION FACTOR P"/>
    <property type="match status" value="1"/>
</dbReference>
<dbReference type="PANTHER" id="PTHR30053:SF12">
    <property type="entry name" value="ELONGATION FACTOR P (EF-P) FAMILY PROTEIN"/>
    <property type="match status" value="1"/>
</dbReference>
<dbReference type="Pfam" id="PF01132">
    <property type="entry name" value="EFP"/>
    <property type="match status" value="1"/>
</dbReference>
<dbReference type="Pfam" id="PF08207">
    <property type="entry name" value="EFP_N"/>
    <property type="match status" value="1"/>
</dbReference>
<dbReference type="Pfam" id="PF09285">
    <property type="entry name" value="Elong-fact-P_C"/>
    <property type="match status" value="1"/>
</dbReference>
<dbReference type="PIRSF" id="PIRSF005901">
    <property type="entry name" value="EF-P"/>
    <property type="match status" value="1"/>
</dbReference>
<dbReference type="SMART" id="SM01185">
    <property type="entry name" value="EFP"/>
    <property type="match status" value="1"/>
</dbReference>
<dbReference type="SMART" id="SM00841">
    <property type="entry name" value="Elong-fact-P_C"/>
    <property type="match status" value="1"/>
</dbReference>
<dbReference type="SUPFAM" id="SSF50249">
    <property type="entry name" value="Nucleic acid-binding proteins"/>
    <property type="match status" value="2"/>
</dbReference>
<dbReference type="SUPFAM" id="SSF50104">
    <property type="entry name" value="Translation proteins SH3-like domain"/>
    <property type="match status" value="1"/>
</dbReference>
<dbReference type="PROSITE" id="PS01275">
    <property type="entry name" value="EFP"/>
    <property type="match status" value="1"/>
</dbReference>
<accession>P64044</accession>
<accession>Q9PAM3</accession>
<sequence>MASYGMNDVKNGMKILVNAEPAVITDTEYVKPGKGQAFTRVKYRLIKSGRVQEVTMKSTDTLEAADVVDTDMQYLYSDGEYWHFMQQETFEQVQADKNGMGGAEKWLKGEEQCVVTLWNGVPIGVQPPNFVELKITETDPGLRGDTSGGGGKPATLETGAVVRVPLFVNQDEVIKVDTRSGEYVSRVK</sequence>
<organism>
    <name type="scientific">Xylella fastidiosa (strain 9a5c)</name>
    <dbReference type="NCBI Taxonomy" id="160492"/>
    <lineage>
        <taxon>Bacteria</taxon>
        <taxon>Pseudomonadati</taxon>
        <taxon>Pseudomonadota</taxon>
        <taxon>Gammaproteobacteria</taxon>
        <taxon>Lysobacterales</taxon>
        <taxon>Lysobacteraceae</taxon>
        <taxon>Xylella</taxon>
    </lineage>
</organism>
<comment type="function">
    <text evidence="1">Involved in peptide bond synthesis. Alleviates ribosome stalling that occurs when 3 or more consecutive Pro residues or the sequence PPG is present in a protein, possibly by augmenting the peptidyl transferase activity of the ribosome. Modification of Lys-34 is required for alleviation.</text>
</comment>
<comment type="pathway">
    <text evidence="1">Protein biosynthesis; polypeptide chain elongation.</text>
</comment>
<comment type="subcellular location">
    <subcellularLocation>
        <location evidence="1">Cytoplasm</location>
    </subcellularLocation>
</comment>
<comment type="PTM">
    <text evidence="1">May be beta-lysylated on the epsilon-amino group of Lys-34 by the combined action of EpmA and EpmB, and then hydroxylated on the C5 position of the same residue by EpmC (if this protein is present). Lysylation is critical for the stimulatory effect of EF-P on peptide-bond formation. The lysylation moiety may extend toward the peptidyltransferase center and stabilize the terminal 3-CCA end of the tRNA. Hydroxylation of the C5 position on Lys-34 may allow additional potential stabilizing hydrogen-bond interactions with the P-tRNA.</text>
</comment>
<comment type="similarity">
    <text evidence="1">Belongs to the elongation factor P family.</text>
</comment>
<comment type="sequence caution" evidence="2">
    <conflict type="erroneous initiation">
        <sequence resource="EMBL-CDS" id="AAF85271"/>
    </conflict>
    <text>Extended N-terminus.</text>
</comment>
<gene>
    <name evidence="1" type="primary">efp</name>
    <name type="ordered locus">XF_2473</name>
</gene>
<keyword id="KW-0963">Cytoplasm</keyword>
<keyword id="KW-0251">Elongation factor</keyword>
<keyword id="KW-0379">Hydroxylation</keyword>
<keyword id="KW-0648">Protein biosynthesis</keyword>
<proteinExistence type="inferred from homology"/>
<protein>
    <recommendedName>
        <fullName evidence="1">Elongation factor P</fullName>
        <shortName evidence="1">EF-P</shortName>
    </recommendedName>
</protein>